<protein>
    <recommendedName>
        <fullName>Elongation factor Ts, chloroplastic</fullName>
        <shortName evidence="1">EF-Ts</shortName>
    </recommendedName>
</protein>
<evidence type="ECO:0000255" key="1">
    <source>
        <dbReference type="HAMAP-Rule" id="MF_03135"/>
    </source>
</evidence>
<accession>O78481</accession>
<gene>
    <name type="primary">tsf</name>
</gene>
<name>EFTS_GUITH</name>
<sequence length="219" mass="24998">MTIEISAKTVKELRERTSAGMMDCKKALQECNGDFEKAVETLKQKGLVSAAKKAARVATEGIIESYIHMGGKLGILVELNCETDFVARRPEFQELAKNIAMQIAACPNVDYIKTSDIPNEIIQKEKETEMNKNDLDNKPTEIKEKIVEGRIQKRLKELSLMDQSYIRDSSILIEELIKENIAKLGENIQIRRFERFTLGEGLEKREDNFNEEVNKMLTK</sequence>
<dbReference type="EMBL" id="AF041468">
    <property type="protein sequence ID" value="AAC35672.1"/>
    <property type="molecule type" value="Genomic_DNA"/>
</dbReference>
<dbReference type="RefSeq" id="NP_050738.1">
    <property type="nucleotide sequence ID" value="NC_000926.1"/>
</dbReference>
<dbReference type="SMR" id="O78481"/>
<dbReference type="GeneID" id="857043"/>
<dbReference type="HOGENOM" id="CLU_047155_1_1_1"/>
<dbReference type="OMA" id="DAGMMDC"/>
<dbReference type="GO" id="GO:0009507">
    <property type="term" value="C:chloroplast"/>
    <property type="evidence" value="ECO:0007669"/>
    <property type="project" value="UniProtKB-SubCell"/>
</dbReference>
<dbReference type="GO" id="GO:0005739">
    <property type="term" value="C:mitochondrion"/>
    <property type="evidence" value="ECO:0007669"/>
    <property type="project" value="UniProtKB-UniRule"/>
</dbReference>
<dbReference type="GO" id="GO:0003746">
    <property type="term" value="F:translation elongation factor activity"/>
    <property type="evidence" value="ECO:0007669"/>
    <property type="project" value="UniProtKB-UniRule"/>
</dbReference>
<dbReference type="CDD" id="cd14275">
    <property type="entry name" value="UBA_EF-Ts"/>
    <property type="match status" value="1"/>
</dbReference>
<dbReference type="FunFam" id="1.10.286.20:FF:000001">
    <property type="entry name" value="Elongation factor Ts"/>
    <property type="match status" value="1"/>
</dbReference>
<dbReference type="FunFam" id="1.10.8.10:FF:000001">
    <property type="entry name" value="Elongation factor Ts"/>
    <property type="match status" value="1"/>
</dbReference>
<dbReference type="Gene3D" id="1.10.286.20">
    <property type="match status" value="1"/>
</dbReference>
<dbReference type="Gene3D" id="1.10.8.10">
    <property type="entry name" value="DNA helicase RuvA subunit, C-terminal domain"/>
    <property type="match status" value="1"/>
</dbReference>
<dbReference type="Gene3D" id="3.30.479.20">
    <property type="entry name" value="Elongation factor Ts, dimerisation domain"/>
    <property type="match status" value="1"/>
</dbReference>
<dbReference type="HAMAP" id="MF_00050">
    <property type="entry name" value="EF_Ts"/>
    <property type="match status" value="1"/>
</dbReference>
<dbReference type="InterPro" id="IPR036402">
    <property type="entry name" value="EF-Ts_dimer_sf"/>
</dbReference>
<dbReference type="InterPro" id="IPR001816">
    <property type="entry name" value="Transl_elong_EFTs/EF1B"/>
</dbReference>
<dbReference type="InterPro" id="IPR014039">
    <property type="entry name" value="Transl_elong_EFTs/EF1B_dimer"/>
</dbReference>
<dbReference type="InterPro" id="IPR018101">
    <property type="entry name" value="Transl_elong_Ts_CS"/>
</dbReference>
<dbReference type="InterPro" id="IPR009060">
    <property type="entry name" value="UBA-like_sf"/>
</dbReference>
<dbReference type="NCBIfam" id="TIGR00116">
    <property type="entry name" value="tsf"/>
    <property type="match status" value="1"/>
</dbReference>
<dbReference type="PANTHER" id="PTHR11741">
    <property type="entry name" value="ELONGATION FACTOR TS"/>
    <property type="match status" value="1"/>
</dbReference>
<dbReference type="PANTHER" id="PTHR11741:SF0">
    <property type="entry name" value="ELONGATION FACTOR TS, MITOCHONDRIAL"/>
    <property type="match status" value="1"/>
</dbReference>
<dbReference type="Pfam" id="PF00889">
    <property type="entry name" value="EF_TS"/>
    <property type="match status" value="1"/>
</dbReference>
<dbReference type="SUPFAM" id="SSF54713">
    <property type="entry name" value="Elongation factor Ts (EF-Ts), dimerisation domain"/>
    <property type="match status" value="1"/>
</dbReference>
<dbReference type="SUPFAM" id="SSF46934">
    <property type="entry name" value="UBA-like"/>
    <property type="match status" value="1"/>
</dbReference>
<dbReference type="PROSITE" id="PS01126">
    <property type="entry name" value="EF_TS_1"/>
    <property type="match status" value="1"/>
</dbReference>
<dbReference type="PROSITE" id="PS01127">
    <property type="entry name" value="EF_TS_2"/>
    <property type="match status" value="1"/>
</dbReference>
<organism>
    <name type="scientific">Guillardia theta</name>
    <name type="common">Cryptophyte</name>
    <name type="synonym">Cryptomonas phi</name>
    <dbReference type="NCBI Taxonomy" id="55529"/>
    <lineage>
        <taxon>Eukaryota</taxon>
        <taxon>Cryptophyceae</taxon>
        <taxon>Pyrenomonadales</taxon>
        <taxon>Geminigeraceae</taxon>
        <taxon>Guillardia</taxon>
    </lineage>
</organism>
<proteinExistence type="inferred from homology"/>
<comment type="function">
    <text evidence="1">Associates with the EF-Tu.GDP complex and induces the exchange of GDP to GTP. It remains bound to the aminoacyl-tRNA.EF-Tu.GTP complex up to the GTP hydrolysis stage on the ribosome.</text>
</comment>
<comment type="subcellular location">
    <subcellularLocation>
        <location>Plastid</location>
        <location>Chloroplast</location>
    </subcellularLocation>
</comment>
<comment type="similarity">
    <text evidence="1">Belongs to the EF-Ts family.</text>
</comment>
<feature type="chain" id="PRO_0000161248" description="Elongation factor Ts, chloroplastic">
    <location>
        <begin position="1"/>
        <end position="219"/>
    </location>
</feature>
<keyword id="KW-0150">Chloroplast</keyword>
<keyword id="KW-0251">Elongation factor</keyword>
<keyword id="KW-0934">Plastid</keyword>
<keyword id="KW-0648">Protein biosynthesis</keyword>
<reference key="1">
    <citation type="journal article" date="1999" name="J. Phycol.">
        <title>The atpA gene cluster of a cryptomonad, Guillardia theta: a piece in the puzzle of chloroplast genome development.</title>
        <authorList>
            <person name="Leitsch C.E.W."/>
            <person name="Kowallik K.V."/>
            <person name="Douglas S.E."/>
        </authorList>
    </citation>
    <scope>NUCLEOTIDE SEQUENCE [GENOMIC DNA]</scope>
</reference>
<reference key="2">
    <citation type="journal article" date="1999" name="J. Mol. Evol.">
        <title>The plastid genome of the cryptophyte alga, Guillardia theta: complete sequence and conserved synteny groups confirm its common ancestry with red algae.</title>
        <authorList>
            <person name="Douglas S.E."/>
            <person name="Penny S.L."/>
        </authorList>
    </citation>
    <scope>NUCLEOTIDE SEQUENCE [LARGE SCALE GENOMIC DNA]</scope>
</reference>
<geneLocation type="chloroplast"/>